<reference key="1">
    <citation type="journal article" date="2002" name="Nature">
        <title>Sequence and analysis of chromosome 2 of Dictyostelium discoideum.</title>
        <authorList>
            <person name="Gloeckner G."/>
            <person name="Eichinger L."/>
            <person name="Szafranski K."/>
            <person name="Pachebat J.A."/>
            <person name="Bankier A.T."/>
            <person name="Dear P.H."/>
            <person name="Lehmann R."/>
            <person name="Baumgart C."/>
            <person name="Parra G."/>
            <person name="Abril J.F."/>
            <person name="Guigo R."/>
            <person name="Kumpf K."/>
            <person name="Tunggal B."/>
            <person name="Cox E.C."/>
            <person name="Quail M.A."/>
            <person name="Platzer M."/>
            <person name="Rosenthal A."/>
            <person name="Noegel A.A."/>
        </authorList>
    </citation>
    <scope>NUCLEOTIDE SEQUENCE [LARGE SCALE GENOMIC DNA]</scope>
    <source>
        <strain>AX4</strain>
    </source>
</reference>
<reference key="2">
    <citation type="journal article" date="2005" name="Nature">
        <title>The genome of the social amoeba Dictyostelium discoideum.</title>
        <authorList>
            <person name="Eichinger L."/>
            <person name="Pachebat J.A."/>
            <person name="Gloeckner G."/>
            <person name="Rajandream M.A."/>
            <person name="Sucgang R."/>
            <person name="Berriman M."/>
            <person name="Song J."/>
            <person name="Olsen R."/>
            <person name="Szafranski K."/>
            <person name="Xu Q."/>
            <person name="Tunggal B."/>
            <person name="Kummerfeld S."/>
            <person name="Madera M."/>
            <person name="Konfortov B.A."/>
            <person name="Rivero F."/>
            <person name="Bankier A.T."/>
            <person name="Lehmann R."/>
            <person name="Hamlin N."/>
            <person name="Davies R."/>
            <person name="Gaudet P."/>
            <person name="Fey P."/>
            <person name="Pilcher K."/>
            <person name="Chen G."/>
            <person name="Saunders D."/>
            <person name="Sodergren E.J."/>
            <person name="Davis P."/>
            <person name="Kerhornou A."/>
            <person name="Nie X."/>
            <person name="Hall N."/>
            <person name="Anjard C."/>
            <person name="Hemphill L."/>
            <person name="Bason N."/>
            <person name="Farbrother P."/>
            <person name="Desany B."/>
            <person name="Just E."/>
            <person name="Morio T."/>
            <person name="Rost R."/>
            <person name="Churcher C.M."/>
            <person name="Cooper J."/>
            <person name="Haydock S."/>
            <person name="van Driessche N."/>
            <person name="Cronin A."/>
            <person name="Goodhead I."/>
            <person name="Muzny D.M."/>
            <person name="Mourier T."/>
            <person name="Pain A."/>
            <person name="Lu M."/>
            <person name="Harper D."/>
            <person name="Lindsay R."/>
            <person name="Hauser H."/>
            <person name="James K.D."/>
            <person name="Quiles M."/>
            <person name="Madan Babu M."/>
            <person name="Saito T."/>
            <person name="Buchrieser C."/>
            <person name="Wardroper A."/>
            <person name="Felder M."/>
            <person name="Thangavelu M."/>
            <person name="Johnson D."/>
            <person name="Knights A."/>
            <person name="Loulseged H."/>
            <person name="Mungall K.L."/>
            <person name="Oliver K."/>
            <person name="Price C."/>
            <person name="Quail M.A."/>
            <person name="Urushihara H."/>
            <person name="Hernandez J."/>
            <person name="Rabbinowitsch E."/>
            <person name="Steffen D."/>
            <person name="Sanders M."/>
            <person name="Ma J."/>
            <person name="Kohara Y."/>
            <person name="Sharp S."/>
            <person name="Simmonds M.N."/>
            <person name="Spiegler S."/>
            <person name="Tivey A."/>
            <person name="Sugano S."/>
            <person name="White B."/>
            <person name="Walker D."/>
            <person name="Woodward J.R."/>
            <person name="Winckler T."/>
            <person name="Tanaka Y."/>
            <person name="Shaulsky G."/>
            <person name="Schleicher M."/>
            <person name="Weinstock G.M."/>
            <person name="Rosenthal A."/>
            <person name="Cox E.C."/>
            <person name="Chisholm R.L."/>
            <person name="Gibbs R.A."/>
            <person name="Loomis W.F."/>
            <person name="Platzer M."/>
            <person name="Kay R.R."/>
            <person name="Williams J.G."/>
            <person name="Dear P.H."/>
            <person name="Noegel A.A."/>
            <person name="Barrell B.G."/>
            <person name="Kuspa A."/>
        </authorList>
    </citation>
    <scope>NUCLEOTIDE SEQUENCE [LARGE SCALE GENOMIC DNA]</scope>
    <source>
        <strain>AX4</strain>
    </source>
</reference>
<gene>
    <name type="primary">nubp1</name>
    <name type="synonym">nbp1</name>
    <name type="ORF">DDB_G0277437</name>
</gene>
<proteinExistence type="inferred from homology"/>
<dbReference type="EMBL" id="AAFI02000020">
    <property type="protein sequence ID" value="EAL68681.1"/>
    <property type="molecule type" value="Genomic_DNA"/>
</dbReference>
<dbReference type="RefSeq" id="XP_642627.1">
    <property type="nucleotide sequence ID" value="XM_637535.1"/>
</dbReference>
<dbReference type="SMR" id="Q8T2F3"/>
<dbReference type="FunCoup" id="Q8T2F3">
    <property type="interactions" value="476"/>
</dbReference>
<dbReference type="STRING" id="44689.Q8T2F3"/>
<dbReference type="PaxDb" id="44689-DDB0232424"/>
<dbReference type="EnsemblProtists" id="EAL68681">
    <property type="protein sequence ID" value="EAL68681"/>
    <property type="gene ID" value="DDB_G0277437"/>
</dbReference>
<dbReference type="GeneID" id="8621044"/>
<dbReference type="KEGG" id="ddi:DDB_G0277437"/>
<dbReference type="dictyBase" id="DDB_G0277437">
    <property type="gene designation" value="nubp1"/>
</dbReference>
<dbReference type="VEuPathDB" id="AmoebaDB:DDB_G0277437"/>
<dbReference type="eggNOG" id="KOG3022">
    <property type="taxonomic scope" value="Eukaryota"/>
</dbReference>
<dbReference type="HOGENOM" id="CLU_024839_0_1_1"/>
<dbReference type="InParanoid" id="Q8T2F3"/>
<dbReference type="OMA" id="EMDCQVG"/>
<dbReference type="PhylomeDB" id="Q8T2F3"/>
<dbReference type="PRO" id="PR:Q8T2F3"/>
<dbReference type="Proteomes" id="UP000002195">
    <property type="component" value="Chromosome 2"/>
</dbReference>
<dbReference type="GO" id="GO:0005829">
    <property type="term" value="C:cytosol"/>
    <property type="evidence" value="ECO:0000318"/>
    <property type="project" value="GO_Central"/>
</dbReference>
<dbReference type="GO" id="GO:0051539">
    <property type="term" value="F:4 iron, 4 sulfur cluster binding"/>
    <property type="evidence" value="ECO:0007669"/>
    <property type="project" value="UniProtKB-UniRule"/>
</dbReference>
<dbReference type="GO" id="GO:0005524">
    <property type="term" value="F:ATP binding"/>
    <property type="evidence" value="ECO:0007669"/>
    <property type="project" value="UniProtKB-KW"/>
</dbReference>
<dbReference type="GO" id="GO:0140663">
    <property type="term" value="F:ATP-dependent FeS chaperone activity"/>
    <property type="evidence" value="ECO:0007669"/>
    <property type="project" value="InterPro"/>
</dbReference>
<dbReference type="GO" id="GO:0051536">
    <property type="term" value="F:iron-sulfur cluster binding"/>
    <property type="evidence" value="ECO:0000318"/>
    <property type="project" value="GO_Central"/>
</dbReference>
<dbReference type="GO" id="GO:0046872">
    <property type="term" value="F:metal ion binding"/>
    <property type="evidence" value="ECO:0007669"/>
    <property type="project" value="UniProtKB-KW"/>
</dbReference>
<dbReference type="GO" id="GO:0016226">
    <property type="term" value="P:iron-sulfur cluster assembly"/>
    <property type="evidence" value="ECO:0000318"/>
    <property type="project" value="GO_Central"/>
</dbReference>
<dbReference type="CDD" id="cd02037">
    <property type="entry name" value="Mrp_NBP35"/>
    <property type="match status" value="1"/>
</dbReference>
<dbReference type="FunFam" id="3.40.50.300:FF:000427">
    <property type="entry name" value="Cytosolic Fe-S cluster assembly factor NUBP1"/>
    <property type="match status" value="1"/>
</dbReference>
<dbReference type="Gene3D" id="3.40.50.300">
    <property type="entry name" value="P-loop containing nucleotide triphosphate hydrolases"/>
    <property type="match status" value="1"/>
</dbReference>
<dbReference type="HAMAP" id="MF_02040">
    <property type="entry name" value="Mrp_NBP35"/>
    <property type="match status" value="1"/>
</dbReference>
<dbReference type="HAMAP" id="MF_03038">
    <property type="entry name" value="NUBP1"/>
    <property type="match status" value="1"/>
</dbReference>
<dbReference type="InterPro" id="IPR000808">
    <property type="entry name" value="Mrp-like_CS"/>
</dbReference>
<dbReference type="InterPro" id="IPR019591">
    <property type="entry name" value="Mrp/NBP35_ATP-bd"/>
</dbReference>
<dbReference type="InterPro" id="IPR028601">
    <property type="entry name" value="NUBP1/Nbp35"/>
</dbReference>
<dbReference type="InterPro" id="IPR027417">
    <property type="entry name" value="P-loop_NTPase"/>
</dbReference>
<dbReference type="InterPro" id="IPR033756">
    <property type="entry name" value="YlxH/NBP35"/>
</dbReference>
<dbReference type="PANTHER" id="PTHR23264:SF35">
    <property type="entry name" value="CYTOSOLIC FE-S CLUSTER ASSEMBLY FACTOR NUBP1"/>
    <property type="match status" value="1"/>
</dbReference>
<dbReference type="PANTHER" id="PTHR23264">
    <property type="entry name" value="NUCLEOTIDE-BINDING PROTEIN NBP35 YEAST -RELATED"/>
    <property type="match status" value="1"/>
</dbReference>
<dbReference type="Pfam" id="PF10609">
    <property type="entry name" value="ParA"/>
    <property type="match status" value="1"/>
</dbReference>
<dbReference type="SUPFAM" id="SSF52540">
    <property type="entry name" value="P-loop containing nucleoside triphosphate hydrolases"/>
    <property type="match status" value="1"/>
</dbReference>
<dbReference type="PROSITE" id="PS01215">
    <property type="entry name" value="MRP"/>
    <property type="match status" value="1"/>
</dbReference>
<sequence length="315" mass="34256">MSDQLVAPPPENCPGTQSEMSGKSAACAGCPNQQICATAPKGPDPDIIEIEERMKTVKNKILVLSGKGGVGKSTFSSQLSFALSMDEKVEVGLLDIDICGPSIPKIMGLEGENIHISGQGWDPVYVQDNLAVMSVGFLLEKEEDAVIWRGPKKNGIIKQFLKDVYWNDLDYLVIDTPPGTSDEHLSIVQYLKTSNLSGAVIVTSPQDVALIDVRKEINFCKKVGVPIIGVVENMSGFVCPKCNKESQIFIPTTGGAEKMSQDMNVPFLGRIPIDPLIARSCDEGKSYLITHPNSEATKQYNLIFNKIKEIVNNSK</sequence>
<organism>
    <name type="scientific">Dictyostelium discoideum</name>
    <name type="common">Social amoeba</name>
    <dbReference type="NCBI Taxonomy" id="44689"/>
    <lineage>
        <taxon>Eukaryota</taxon>
        <taxon>Amoebozoa</taxon>
        <taxon>Evosea</taxon>
        <taxon>Eumycetozoa</taxon>
        <taxon>Dictyostelia</taxon>
        <taxon>Dictyosteliales</taxon>
        <taxon>Dictyosteliaceae</taxon>
        <taxon>Dictyostelium</taxon>
    </lineage>
</organism>
<comment type="function">
    <text evidence="1">Component of the cytosolic iron-sulfur (Fe/S) protein assembly (CIA) machinery. Required for maturation of extramitochondrial Fe-S proteins. The nubp1-nubp2 heterotetramer forms a Fe-S scaffold complex, mediating the de novo assembly of an Fe-S cluster and its transfer to target apoproteins.</text>
</comment>
<comment type="cofactor">
    <cofactor evidence="1">
        <name>[4Fe-4S] cluster</name>
        <dbReference type="ChEBI" id="CHEBI:49883"/>
    </cofactor>
    <text evidence="1">Binds 4 [4Fe-4S] clusters per heterotetramer. Contains two stable clusters in the N-termini of nubp1 and two labile, bridging clusters between subunits of the nubp1-nubp2 heterotetramer.</text>
</comment>
<comment type="subunit">
    <text evidence="1">Heterotetramer of 2 nubp1 and 2 nubp2 chains.</text>
</comment>
<comment type="subcellular location">
    <subcellularLocation>
        <location evidence="1">Cytoplasm</location>
    </subcellularLocation>
</comment>
<comment type="similarity">
    <text evidence="1">Belongs to the Mrp/NBP35 ATP-binding proteins family. NUBP1/NBP35 subfamily.</text>
</comment>
<protein>
    <recommendedName>
        <fullName evidence="1">Cytosolic Fe-S cluster assembly factor NUBP1 homolog</fullName>
    </recommendedName>
</protein>
<evidence type="ECO:0000255" key="1">
    <source>
        <dbReference type="HAMAP-Rule" id="MF_03038"/>
    </source>
</evidence>
<evidence type="ECO:0000256" key="2">
    <source>
        <dbReference type="SAM" id="MobiDB-lite"/>
    </source>
</evidence>
<keyword id="KW-0004">4Fe-4S</keyword>
<keyword id="KW-0067">ATP-binding</keyword>
<keyword id="KW-0963">Cytoplasm</keyword>
<keyword id="KW-0408">Iron</keyword>
<keyword id="KW-0411">Iron-sulfur</keyword>
<keyword id="KW-0479">Metal-binding</keyword>
<keyword id="KW-0547">Nucleotide-binding</keyword>
<keyword id="KW-1185">Reference proteome</keyword>
<name>NUBP1_DICDI</name>
<accession>Q8T2F3</accession>
<accession>Q54ZL5</accession>
<feature type="chain" id="PRO_0000327471" description="Cytosolic Fe-S cluster assembly factor NUBP1 homolog">
    <location>
        <begin position="1"/>
        <end position="315"/>
    </location>
</feature>
<feature type="region of interest" description="Disordered" evidence="2">
    <location>
        <begin position="1"/>
        <end position="23"/>
    </location>
</feature>
<feature type="binding site" evidence="1">
    <location>
        <position position="13"/>
    </location>
    <ligand>
        <name>[4Fe-4S] cluster</name>
        <dbReference type="ChEBI" id="CHEBI:49883"/>
        <label>1</label>
    </ligand>
</feature>
<feature type="binding site" evidence="1">
    <location>
        <position position="27"/>
    </location>
    <ligand>
        <name>[4Fe-4S] cluster</name>
        <dbReference type="ChEBI" id="CHEBI:49883"/>
        <label>1</label>
    </ligand>
</feature>
<feature type="binding site" evidence="1">
    <location>
        <position position="30"/>
    </location>
    <ligand>
        <name>[4Fe-4S] cluster</name>
        <dbReference type="ChEBI" id="CHEBI:49883"/>
        <label>1</label>
    </ligand>
</feature>
<feature type="binding site" evidence="1">
    <location>
        <position position="36"/>
    </location>
    <ligand>
        <name>[4Fe-4S] cluster</name>
        <dbReference type="ChEBI" id="CHEBI:49883"/>
        <label>1</label>
    </ligand>
</feature>
<feature type="binding site" evidence="1">
    <location>
        <begin position="66"/>
        <end position="73"/>
    </location>
    <ligand>
        <name>ATP</name>
        <dbReference type="ChEBI" id="CHEBI:30616"/>
    </ligand>
</feature>
<feature type="binding site" evidence="1">
    <location>
        <position position="239"/>
    </location>
    <ligand>
        <name>[4Fe-4S] cluster</name>
        <dbReference type="ChEBI" id="CHEBI:49883"/>
        <label>2</label>
        <note>ligand shared with heterodimeric partner</note>
    </ligand>
</feature>
<feature type="binding site" evidence="1">
    <location>
        <position position="242"/>
    </location>
    <ligand>
        <name>[4Fe-4S] cluster</name>
        <dbReference type="ChEBI" id="CHEBI:49883"/>
        <label>2</label>
        <note>ligand shared with heterodimeric partner</note>
    </ligand>
</feature>